<organism>
    <name type="scientific">Idiomarina loihiensis (strain ATCC BAA-735 / DSM 15497 / L2-TR)</name>
    <dbReference type="NCBI Taxonomy" id="283942"/>
    <lineage>
        <taxon>Bacteria</taxon>
        <taxon>Pseudomonadati</taxon>
        <taxon>Pseudomonadota</taxon>
        <taxon>Gammaproteobacteria</taxon>
        <taxon>Alteromonadales</taxon>
        <taxon>Idiomarinaceae</taxon>
        <taxon>Idiomarina</taxon>
    </lineage>
</organism>
<accession>Q5QTZ3</accession>
<comment type="function">
    <text evidence="1">Catalyzes the hydrolysis of N-succinyl-L,L-diaminopimelic acid (SDAP), forming succinate and LL-2,6-diaminopimelate (DAP), an intermediate involved in the bacterial biosynthesis of lysine and meso-diaminopimelic acid, an essential component of bacterial cell walls.</text>
</comment>
<comment type="catalytic activity">
    <reaction evidence="1">
        <text>N-succinyl-(2S,6S)-2,6-diaminopimelate + H2O = (2S,6S)-2,6-diaminopimelate + succinate</text>
        <dbReference type="Rhea" id="RHEA:22608"/>
        <dbReference type="ChEBI" id="CHEBI:15377"/>
        <dbReference type="ChEBI" id="CHEBI:30031"/>
        <dbReference type="ChEBI" id="CHEBI:57609"/>
        <dbReference type="ChEBI" id="CHEBI:58087"/>
        <dbReference type="EC" id="3.5.1.18"/>
    </reaction>
</comment>
<comment type="cofactor">
    <cofactor evidence="1">
        <name>Zn(2+)</name>
        <dbReference type="ChEBI" id="CHEBI:29105"/>
    </cofactor>
    <cofactor evidence="1">
        <name>Co(2+)</name>
        <dbReference type="ChEBI" id="CHEBI:48828"/>
    </cofactor>
    <text evidence="1">Binds 2 Zn(2+) or Co(2+) ions per subunit.</text>
</comment>
<comment type="pathway">
    <text evidence="1">Amino-acid biosynthesis; L-lysine biosynthesis via DAP pathway; LL-2,6-diaminopimelate from (S)-tetrahydrodipicolinate (succinylase route): step 3/3.</text>
</comment>
<comment type="subunit">
    <text evidence="1">Homodimer.</text>
</comment>
<comment type="similarity">
    <text evidence="1">Belongs to the peptidase M20A family. DapE subfamily.</text>
</comment>
<dbReference type="EC" id="3.5.1.18" evidence="1"/>
<dbReference type="EMBL" id="AE017340">
    <property type="protein sequence ID" value="AAV82295.1"/>
    <property type="molecule type" value="Genomic_DNA"/>
</dbReference>
<dbReference type="RefSeq" id="WP_011234701.1">
    <property type="nucleotide sequence ID" value="NC_006512.1"/>
</dbReference>
<dbReference type="SMR" id="Q5QTZ3"/>
<dbReference type="STRING" id="283942.IL1455"/>
<dbReference type="GeneID" id="41336632"/>
<dbReference type="KEGG" id="ilo:IL1455"/>
<dbReference type="eggNOG" id="COG0624">
    <property type="taxonomic scope" value="Bacteria"/>
</dbReference>
<dbReference type="HOGENOM" id="CLU_021802_4_0_6"/>
<dbReference type="OrthoDB" id="9809784at2"/>
<dbReference type="UniPathway" id="UPA00034">
    <property type="reaction ID" value="UER00021"/>
</dbReference>
<dbReference type="Proteomes" id="UP000001171">
    <property type="component" value="Chromosome"/>
</dbReference>
<dbReference type="GO" id="GO:0008777">
    <property type="term" value="F:acetylornithine deacetylase activity"/>
    <property type="evidence" value="ECO:0007669"/>
    <property type="project" value="TreeGrafter"/>
</dbReference>
<dbReference type="GO" id="GO:0050897">
    <property type="term" value="F:cobalt ion binding"/>
    <property type="evidence" value="ECO:0007669"/>
    <property type="project" value="UniProtKB-UniRule"/>
</dbReference>
<dbReference type="GO" id="GO:0009014">
    <property type="term" value="F:succinyl-diaminopimelate desuccinylase activity"/>
    <property type="evidence" value="ECO:0007669"/>
    <property type="project" value="UniProtKB-UniRule"/>
</dbReference>
<dbReference type="GO" id="GO:0008270">
    <property type="term" value="F:zinc ion binding"/>
    <property type="evidence" value="ECO:0007669"/>
    <property type="project" value="UniProtKB-UniRule"/>
</dbReference>
<dbReference type="GO" id="GO:0019877">
    <property type="term" value="P:diaminopimelate biosynthetic process"/>
    <property type="evidence" value="ECO:0007669"/>
    <property type="project" value="UniProtKB-UniRule"/>
</dbReference>
<dbReference type="GO" id="GO:0006526">
    <property type="term" value="P:L-arginine biosynthetic process"/>
    <property type="evidence" value="ECO:0007669"/>
    <property type="project" value="TreeGrafter"/>
</dbReference>
<dbReference type="GO" id="GO:0009089">
    <property type="term" value="P:lysine biosynthetic process via diaminopimelate"/>
    <property type="evidence" value="ECO:0007669"/>
    <property type="project" value="UniProtKB-UniRule"/>
</dbReference>
<dbReference type="CDD" id="cd03891">
    <property type="entry name" value="M20_DapE_proteobac"/>
    <property type="match status" value="1"/>
</dbReference>
<dbReference type="FunFam" id="3.30.70.360:FF:000011">
    <property type="entry name" value="Succinyl-diaminopimelate desuccinylase"/>
    <property type="match status" value="1"/>
</dbReference>
<dbReference type="FunFam" id="3.40.630.10:FF:000005">
    <property type="entry name" value="Succinyl-diaminopimelate desuccinylase"/>
    <property type="match status" value="1"/>
</dbReference>
<dbReference type="FunFam" id="3.40.630.10:FF:000010">
    <property type="entry name" value="Succinyl-diaminopimelate desuccinylase"/>
    <property type="match status" value="1"/>
</dbReference>
<dbReference type="Gene3D" id="3.40.630.10">
    <property type="entry name" value="Zn peptidases"/>
    <property type="match status" value="2"/>
</dbReference>
<dbReference type="HAMAP" id="MF_01690">
    <property type="entry name" value="DapE"/>
    <property type="match status" value="1"/>
</dbReference>
<dbReference type="InterPro" id="IPR001261">
    <property type="entry name" value="ArgE/DapE_CS"/>
</dbReference>
<dbReference type="InterPro" id="IPR036264">
    <property type="entry name" value="Bact_exopeptidase_dim_dom"/>
</dbReference>
<dbReference type="InterPro" id="IPR005941">
    <property type="entry name" value="DapE_proteobac"/>
</dbReference>
<dbReference type="InterPro" id="IPR002933">
    <property type="entry name" value="Peptidase_M20"/>
</dbReference>
<dbReference type="InterPro" id="IPR011650">
    <property type="entry name" value="Peptidase_M20_dimer"/>
</dbReference>
<dbReference type="InterPro" id="IPR050072">
    <property type="entry name" value="Peptidase_M20A"/>
</dbReference>
<dbReference type="NCBIfam" id="TIGR01246">
    <property type="entry name" value="dapE_proteo"/>
    <property type="match status" value="1"/>
</dbReference>
<dbReference type="NCBIfam" id="NF009557">
    <property type="entry name" value="PRK13009.1"/>
    <property type="match status" value="1"/>
</dbReference>
<dbReference type="PANTHER" id="PTHR43808">
    <property type="entry name" value="ACETYLORNITHINE DEACETYLASE"/>
    <property type="match status" value="1"/>
</dbReference>
<dbReference type="PANTHER" id="PTHR43808:SF31">
    <property type="entry name" value="N-ACETYL-L-CITRULLINE DEACETYLASE"/>
    <property type="match status" value="1"/>
</dbReference>
<dbReference type="Pfam" id="PF07687">
    <property type="entry name" value="M20_dimer"/>
    <property type="match status" value="1"/>
</dbReference>
<dbReference type="Pfam" id="PF01546">
    <property type="entry name" value="Peptidase_M20"/>
    <property type="match status" value="1"/>
</dbReference>
<dbReference type="SUPFAM" id="SSF55031">
    <property type="entry name" value="Bacterial exopeptidase dimerisation domain"/>
    <property type="match status" value="1"/>
</dbReference>
<dbReference type="SUPFAM" id="SSF53187">
    <property type="entry name" value="Zn-dependent exopeptidases"/>
    <property type="match status" value="1"/>
</dbReference>
<dbReference type="PROSITE" id="PS00759">
    <property type="entry name" value="ARGE_DAPE_CPG2_2"/>
    <property type="match status" value="1"/>
</dbReference>
<sequence length="376" mass="41258">MSSETLKFARELISRPSITPEDEGCQQLIGERLAAQGFNLESMIFEDTTNLWARRGQGRKLFCFAGHTDVVPPGDINDWQFPPFEPTTHEGYLYGRGAADMKGSLAAMITATERFIKDYPNVDADIGFLITSDEEGPFINGTKRVIETLQERNENIDWCIVGEPSSTDTLGDIVKNGRRGSLTGDLTVLGIQGHVAYPHLAKNPVHDLAPALSELINEEWDQGNASFPPTTFQVSNIQAGTGAGNVIPGRIDTQFNFRFSTELTAEKIKQRVEAILDKHSLKYHLQWKLNGPPFLTESGALVEAVQAAIEHECGFSTTLSTAGGTSDGRFIAPTGAQVIELGPVNATIHKVNECVKISDLDKLSDVYYRCLEKLLC</sequence>
<gene>
    <name evidence="1" type="primary">dapE</name>
    <name type="ordered locus">IL1455</name>
</gene>
<name>DAPE_IDILO</name>
<evidence type="ECO:0000255" key="1">
    <source>
        <dbReference type="HAMAP-Rule" id="MF_01690"/>
    </source>
</evidence>
<protein>
    <recommendedName>
        <fullName evidence="1">Succinyl-diaminopimelate desuccinylase</fullName>
        <shortName evidence="1">SDAP desuccinylase</shortName>
        <ecNumber evidence="1">3.5.1.18</ecNumber>
    </recommendedName>
    <alternativeName>
        <fullName evidence="1">N-succinyl-LL-2,6-diaminoheptanedioate amidohydrolase</fullName>
    </alternativeName>
</protein>
<keyword id="KW-0028">Amino-acid biosynthesis</keyword>
<keyword id="KW-0170">Cobalt</keyword>
<keyword id="KW-0220">Diaminopimelate biosynthesis</keyword>
<keyword id="KW-0378">Hydrolase</keyword>
<keyword id="KW-0457">Lysine biosynthesis</keyword>
<keyword id="KW-0479">Metal-binding</keyword>
<keyword id="KW-1185">Reference proteome</keyword>
<keyword id="KW-0862">Zinc</keyword>
<feature type="chain" id="PRO_0000375593" description="Succinyl-diaminopimelate desuccinylase">
    <location>
        <begin position="1"/>
        <end position="376"/>
    </location>
</feature>
<feature type="active site" evidence="1">
    <location>
        <position position="69"/>
    </location>
</feature>
<feature type="active site" description="Proton acceptor" evidence="1">
    <location>
        <position position="134"/>
    </location>
</feature>
<feature type="binding site" evidence="1">
    <location>
        <position position="67"/>
    </location>
    <ligand>
        <name>Zn(2+)</name>
        <dbReference type="ChEBI" id="CHEBI:29105"/>
        <label>1</label>
    </ligand>
</feature>
<feature type="binding site" evidence="1">
    <location>
        <position position="100"/>
    </location>
    <ligand>
        <name>Zn(2+)</name>
        <dbReference type="ChEBI" id="CHEBI:29105"/>
        <label>1</label>
    </ligand>
</feature>
<feature type="binding site" evidence="1">
    <location>
        <position position="100"/>
    </location>
    <ligand>
        <name>Zn(2+)</name>
        <dbReference type="ChEBI" id="CHEBI:29105"/>
        <label>2</label>
    </ligand>
</feature>
<feature type="binding site" evidence="1">
    <location>
        <position position="135"/>
    </location>
    <ligand>
        <name>Zn(2+)</name>
        <dbReference type="ChEBI" id="CHEBI:29105"/>
        <label>2</label>
    </ligand>
</feature>
<feature type="binding site" evidence="1">
    <location>
        <position position="163"/>
    </location>
    <ligand>
        <name>Zn(2+)</name>
        <dbReference type="ChEBI" id="CHEBI:29105"/>
        <label>1</label>
    </ligand>
</feature>
<feature type="binding site" evidence="1">
    <location>
        <position position="349"/>
    </location>
    <ligand>
        <name>Zn(2+)</name>
        <dbReference type="ChEBI" id="CHEBI:29105"/>
        <label>2</label>
    </ligand>
</feature>
<proteinExistence type="inferred from homology"/>
<reference key="1">
    <citation type="journal article" date="2004" name="Proc. Natl. Acad. Sci. U.S.A.">
        <title>Genome sequence of the deep-sea gamma-proteobacterium Idiomarina loihiensis reveals amino acid fermentation as a source of carbon and energy.</title>
        <authorList>
            <person name="Hou S."/>
            <person name="Saw J.H."/>
            <person name="Lee K.S."/>
            <person name="Freitas T.A."/>
            <person name="Belisle C."/>
            <person name="Kawarabayasi Y."/>
            <person name="Donachie S.P."/>
            <person name="Pikina A."/>
            <person name="Galperin M.Y."/>
            <person name="Koonin E.V."/>
            <person name="Makarova K.S."/>
            <person name="Omelchenko M.V."/>
            <person name="Sorokin A."/>
            <person name="Wolf Y.I."/>
            <person name="Li Q.X."/>
            <person name="Keum Y.S."/>
            <person name="Campbell S."/>
            <person name="Denery J."/>
            <person name="Aizawa S."/>
            <person name="Shibata S."/>
            <person name="Malahoff A."/>
            <person name="Alam M."/>
        </authorList>
    </citation>
    <scope>NUCLEOTIDE SEQUENCE [LARGE SCALE GENOMIC DNA]</scope>
    <source>
        <strain>ATCC BAA-735 / DSM 15497 / L2-TR</strain>
    </source>
</reference>